<protein>
    <recommendedName>
        <fullName>ADP-ribosylation factor-like protein 5</fullName>
    </recommendedName>
</protein>
<dbReference type="EMBL" id="Z22181">
    <property type="protein sequence ID" value="CAA80185.1"/>
    <property type="molecule type" value="Genomic_DNA"/>
</dbReference>
<dbReference type="PIR" id="S40940">
    <property type="entry name" value="S40940"/>
</dbReference>
<dbReference type="RefSeq" id="NP_001379051.1">
    <property type="nucleotide sequence ID" value="NM_001392182.1"/>
</dbReference>
<dbReference type="RefSeq" id="NP_499178.1">
    <property type="nucleotide sequence ID" value="NM_066777.3"/>
</dbReference>
<dbReference type="SMR" id="P34212"/>
<dbReference type="FunCoup" id="P34212">
    <property type="interactions" value="1876"/>
</dbReference>
<dbReference type="STRING" id="6239.ZK632.8.1"/>
<dbReference type="PaxDb" id="6239-ZK632.8"/>
<dbReference type="PeptideAtlas" id="P34212"/>
<dbReference type="EnsemblMetazoa" id="ZK632.8.1">
    <property type="protein sequence ID" value="ZK632.8.1"/>
    <property type="gene ID" value="WBGene00000189"/>
</dbReference>
<dbReference type="GeneID" id="176392"/>
<dbReference type="UCSC" id="ZK632.8">
    <property type="organism name" value="c. elegans"/>
</dbReference>
<dbReference type="AGR" id="WB:WBGene00000189"/>
<dbReference type="WormBase" id="ZK632.8">
    <property type="protein sequence ID" value="CE00425"/>
    <property type="gene ID" value="WBGene00000189"/>
    <property type="gene designation" value="arl-5"/>
</dbReference>
<dbReference type="eggNOG" id="KOG0070">
    <property type="taxonomic scope" value="Eukaryota"/>
</dbReference>
<dbReference type="HOGENOM" id="CLU_040729_9_1_1"/>
<dbReference type="InParanoid" id="P34212"/>
<dbReference type="OMA" id="NGCCAVK"/>
<dbReference type="OrthoDB" id="2011769at2759"/>
<dbReference type="PhylomeDB" id="P34212"/>
<dbReference type="PRO" id="PR:P34212"/>
<dbReference type="Proteomes" id="UP000001940">
    <property type="component" value="Chromosome III"/>
</dbReference>
<dbReference type="Bgee" id="WBGene00000189">
    <property type="expression patterns" value="Expressed in embryo and 3 other cell types or tissues"/>
</dbReference>
<dbReference type="GO" id="GO:0005737">
    <property type="term" value="C:cytoplasm"/>
    <property type="evidence" value="ECO:0000318"/>
    <property type="project" value="GO_Central"/>
</dbReference>
<dbReference type="GO" id="GO:0005802">
    <property type="term" value="C:trans-Golgi network"/>
    <property type="evidence" value="ECO:0000318"/>
    <property type="project" value="GO_Central"/>
</dbReference>
<dbReference type="GO" id="GO:0005525">
    <property type="term" value="F:GTP binding"/>
    <property type="evidence" value="ECO:0000318"/>
    <property type="project" value="GO_Central"/>
</dbReference>
<dbReference type="GO" id="GO:0003924">
    <property type="term" value="F:GTPase activity"/>
    <property type="evidence" value="ECO:0007669"/>
    <property type="project" value="InterPro"/>
</dbReference>
<dbReference type="GO" id="GO:0006886">
    <property type="term" value="P:intracellular protein transport"/>
    <property type="evidence" value="ECO:0000318"/>
    <property type="project" value="GO_Central"/>
</dbReference>
<dbReference type="GO" id="GO:0000226">
    <property type="term" value="P:microtubule cytoskeleton organization"/>
    <property type="evidence" value="ECO:0000315"/>
    <property type="project" value="WormBase"/>
</dbReference>
<dbReference type="GO" id="GO:1903292">
    <property type="term" value="P:protein localization to Golgi membrane"/>
    <property type="evidence" value="ECO:0000318"/>
    <property type="project" value="GO_Central"/>
</dbReference>
<dbReference type="GO" id="GO:0016192">
    <property type="term" value="P:vesicle-mediated transport"/>
    <property type="evidence" value="ECO:0000318"/>
    <property type="project" value="GO_Central"/>
</dbReference>
<dbReference type="CDD" id="cd04153">
    <property type="entry name" value="Arl5_Arl8"/>
    <property type="match status" value="1"/>
</dbReference>
<dbReference type="FunFam" id="3.40.50.300:FF:003093">
    <property type="entry name" value="ADP-ribosylation factor-like protein 5"/>
    <property type="match status" value="1"/>
</dbReference>
<dbReference type="Gene3D" id="3.40.50.300">
    <property type="entry name" value="P-loop containing nucleotide triphosphate hydrolases"/>
    <property type="match status" value="1"/>
</dbReference>
<dbReference type="InterPro" id="IPR027417">
    <property type="entry name" value="P-loop_NTPase"/>
</dbReference>
<dbReference type="InterPro" id="IPR005225">
    <property type="entry name" value="Small_GTP-bd"/>
</dbReference>
<dbReference type="InterPro" id="IPR024156">
    <property type="entry name" value="Small_GTPase_ARF"/>
</dbReference>
<dbReference type="InterPro" id="IPR006689">
    <property type="entry name" value="Small_GTPase_ARF/SAR"/>
</dbReference>
<dbReference type="NCBIfam" id="TIGR00231">
    <property type="entry name" value="small_GTP"/>
    <property type="match status" value="1"/>
</dbReference>
<dbReference type="PANTHER" id="PTHR11711">
    <property type="entry name" value="ADP RIBOSYLATION FACTOR-RELATED"/>
    <property type="match status" value="1"/>
</dbReference>
<dbReference type="Pfam" id="PF00025">
    <property type="entry name" value="Arf"/>
    <property type="match status" value="1"/>
</dbReference>
<dbReference type="PRINTS" id="PR00328">
    <property type="entry name" value="SAR1GTPBP"/>
</dbReference>
<dbReference type="SMART" id="SM00177">
    <property type="entry name" value="ARF"/>
    <property type="match status" value="1"/>
</dbReference>
<dbReference type="SMART" id="SM00178">
    <property type="entry name" value="SAR"/>
    <property type="match status" value="1"/>
</dbReference>
<dbReference type="SUPFAM" id="SSF52540">
    <property type="entry name" value="P-loop containing nucleoside triphosphate hydrolases"/>
    <property type="match status" value="1"/>
</dbReference>
<dbReference type="PROSITE" id="PS51417">
    <property type="entry name" value="ARF"/>
    <property type="match status" value="1"/>
</dbReference>
<feature type="initiator methionine" description="Removed" evidence="3">
    <location>
        <position position="1"/>
    </location>
</feature>
<feature type="chain" id="PRO_0000207408" description="ADP-ribosylation factor-like protein 5">
    <location>
        <begin position="2"/>
        <end position="178"/>
    </location>
</feature>
<feature type="binding site" evidence="1">
    <location>
        <begin position="24"/>
        <end position="31"/>
    </location>
    <ligand>
        <name>GTP</name>
        <dbReference type="ChEBI" id="CHEBI:37565"/>
    </ligand>
</feature>
<feature type="binding site" evidence="1">
    <location>
        <begin position="67"/>
        <end position="71"/>
    </location>
    <ligand>
        <name>GTP</name>
        <dbReference type="ChEBI" id="CHEBI:37565"/>
    </ligand>
</feature>
<feature type="binding site" evidence="1">
    <location>
        <begin position="126"/>
        <end position="129"/>
    </location>
    <ligand>
        <name>GTP</name>
        <dbReference type="ChEBI" id="CHEBI:37565"/>
    </ligand>
</feature>
<feature type="lipid moiety-binding region" description="N-myristoyl glycine" evidence="3">
    <location>
        <position position="2"/>
    </location>
</feature>
<sequence>MGLIMAKLFQSWWIGKKYKIIVVGLDNAGKTTILYNYVTKDQVETKPTIGSNVEEVSYRNLDFVIWDIGGQESLRKSWSTYYVQTDVVIVVIDSSDTTRIPIMKEQLHNMLQHEDLARAHILVLANKQDLPGAMNPAEVSTQLGLQTLRGARKWQINGCCAVKGEGLPEALEWIANNL</sequence>
<proteinExistence type="inferred from homology"/>
<organism>
    <name type="scientific">Caenorhabditis elegans</name>
    <dbReference type="NCBI Taxonomy" id="6239"/>
    <lineage>
        <taxon>Eukaryota</taxon>
        <taxon>Metazoa</taxon>
        <taxon>Ecdysozoa</taxon>
        <taxon>Nematoda</taxon>
        <taxon>Chromadorea</taxon>
        <taxon>Rhabditida</taxon>
        <taxon>Rhabditina</taxon>
        <taxon>Rhabditomorpha</taxon>
        <taxon>Rhabditoidea</taxon>
        <taxon>Rhabditidae</taxon>
        <taxon>Peloderinae</taxon>
        <taxon>Caenorhabditis</taxon>
    </lineage>
</organism>
<reference key="1">
    <citation type="journal article" date="1994" name="Nature">
        <title>2.2 Mb of contiguous nucleotide sequence from chromosome III of C. elegans.</title>
        <authorList>
            <person name="Wilson R."/>
            <person name="Ainscough R."/>
            <person name="Anderson K."/>
            <person name="Baynes C."/>
            <person name="Berks M."/>
            <person name="Bonfield J."/>
            <person name="Burton J."/>
            <person name="Connell M."/>
            <person name="Copsey T."/>
            <person name="Cooper J."/>
            <person name="Coulson A."/>
            <person name="Craxton M."/>
            <person name="Dear S."/>
            <person name="Du Z."/>
            <person name="Durbin R."/>
            <person name="Favello A."/>
            <person name="Fraser A."/>
            <person name="Fulton L."/>
            <person name="Gardner A."/>
            <person name="Green P."/>
            <person name="Hawkins T."/>
            <person name="Hillier L."/>
            <person name="Jier M."/>
            <person name="Johnston L."/>
            <person name="Jones M."/>
            <person name="Kershaw J."/>
            <person name="Kirsten J."/>
            <person name="Laisster N."/>
            <person name="Latreille P."/>
            <person name="Lightning J."/>
            <person name="Lloyd C."/>
            <person name="Mortimore B."/>
            <person name="O'Callaghan M."/>
            <person name="Parsons J."/>
            <person name="Percy C."/>
            <person name="Rifken L."/>
            <person name="Roopra A."/>
            <person name="Saunders D."/>
            <person name="Shownkeen R."/>
            <person name="Sims M."/>
            <person name="Smaldon N."/>
            <person name="Smith A."/>
            <person name="Smith M."/>
            <person name="Sonnhammer E."/>
            <person name="Staden R."/>
            <person name="Sulston J."/>
            <person name="Thierry-Mieg J."/>
            <person name="Thomas K."/>
            <person name="Vaudin M."/>
            <person name="Vaughan K."/>
            <person name="Waterston R."/>
            <person name="Watson A."/>
            <person name="Weinstock L."/>
            <person name="Wilkinson-Sproat J."/>
            <person name="Wohldman P."/>
        </authorList>
    </citation>
    <scope>NUCLEOTIDE SEQUENCE [LARGE SCALE GENOMIC DNA]</scope>
    <source>
        <strain>Bristol N2</strain>
    </source>
</reference>
<reference key="2">
    <citation type="journal article" date="1998" name="Science">
        <title>Genome sequence of the nematode C. elegans: a platform for investigating biology.</title>
        <authorList>
            <consortium name="The C. elegans sequencing consortium"/>
        </authorList>
    </citation>
    <scope>NUCLEOTIDE SEQUENCE [LARGE SCALE GENOMIC DNA]</scope>
    <source>
        <strain>Bristol N2</strain>
    </source>
</reference>
<reference key="3">
    <citation type="journal article" date="2014" name="Proc. Natl. Acad. Sci. U.S.A.">
        <title>The small GTPase RAB-11 directs polarized exocytosis of the intracellular pathogen N. parisii for fecal-oral transmission from C. elegans.</title>
        <authorList>
            <person name="Szumowski S.C."/>
            <person name="Botts M.R."/>
            <person name="Popovich J.J."/>
            <person name="Smelkinson M.G."/>
            <person name="Troemel E.R."/>
        </authorList>
    </citation>
    <scope>FUNCTION</scope>
    <scope>DISRUPTION PHENOTYPE</scope>
</reference>
<comment type="function">
    <text evidence="2 4">GTP-binding protein that may be involved in protein trafficking; may modulate vesicle budding and uncoating within the Golgi apparatus (By similarity). Plays a role in the shedding of pathogen spores from intestinal cells (PubMed:24843160).</text>
</comment>
<comment type="subcellular location">
    <subcellularLocation>
        <location evidence="1">Golgi apparatus</location>
    </subcellularLocation>
</comment>
<comment type="disruption phenotype">
    <text evidence="4">RNAi-mediated knockdown results in disrupted clearance of intracellular pathogen N.parisii from intestinal cells.</text>
</comment>
<comment type="similarity">
    <text evidence="5">Belongs to the small GTPase superfamily. Arf family.</text>
</comment>
<accession>P34212</accession>
<keyword id="KW-0931">ER-Golgi transport</keyword>
<keyword id="KW-0333">Golgi apparatus</keyword>
<keyword id="KW-0342">GTP-binding</keyword>
<keyword id="KW-0449">Lipoprotein</keyword>
<keyword id="KW-0519">Myristate</keyword>
<keyword id="KW-0547">Nucleotide-binding</keyword>
<keyword id="KW-0653">Protein transport</keyword>
<keyword id="KW-1185">Reference proteome</keyword>
<keyword id="KW-0813">Transport</keyword>
<evidence type="ECO:0000250" key="1"/>
<evidence type="ECO:0000250" key="2">
    <source>
        <dbReference type="UniProtKB" id="P40945"/>
    </source>
</evidence>
<evidence type="ECO:0000255" key="3"/>
<evidence type="ECO:0000269" key="4">
    <source>
    </source>
</evidence>
<evidence type="ECO:0000305" key="5"/>
<name>ARL5_CAEEL</name>
<gene>
    <name type="primary">arl-5</name>
    <name type="ORF">ZK632.8</name>
</gene>